<sequence length="301" mass="31482">MATSNSSDSSMSAEVPAPYGNGPANAPATPSDTAKKPVARIRTHHLQQAKDKGEHFAMLTAYEQYTAEIFDEAGIEVLLVGDSASNNVFGNETSLPVTVDELLPLCRAVARSAKRALVVADLPFGSYEVSAEQAVATGVRFLKEGLAHAVKIEGGKFYADTVRAMVQAGIPVMAHIGFTPQSEHSLGGYRVQGRGDDAQRLIDDAVALAEAGAFSVLMEMVPAATAAAVDAAIAVPTVGIGAGNTTTGQVLVWQDMAGLRGGKMAKFVKQYADLRTSLSNAAKAYGDDVRTGQFPGPEHSF</sequence>
<evidence type="ECO:0000255" key="1">
    <source>
        <dbReference type="HAMAP-Rule" id="MF_00156"/>
    </source>
</evidence>
<evidence type="ECO:0000256" key="2">
    <source>
        <dbReference type="SAM" id="MobiDB-lite"/>
    </source>
</evidence>
<dbReference type="EC" id="2.1.2.11" evidence="1"/>
<dbReference type="EMBL" id="CP000454">
    <property type="protein sequence ID" value="ABK02985.1"/>
    <property type="molecule type" value="Genomic_DNA"/>
</dbReference>
<dbReference type="RefSeq" id="WP_011691451.1">
    <property type="nucleotide sequence ID" value="NC_008541.1"/>
</dbReference>
<dbReference type="SMR" id="A0JVB5"/>
<dbReference type="STRING" id="290399.Arth_1591"/>
<dbReference type="KEGG" id="art:Arth_1591"/>
<dbReference type="eggNOG" id="COG0413">
    <property type="taxonomic scope" value="Bacteria"/>
</dbReference>
<dbReference type="HOGENOM" id="CLU_036645_1_0_11"/>
<dbReference type="OrthoDB" id="9781789at2"/>
<dbReference type="UniPathway" id="UPA00028">
    <property type="reaction ID" value="UER00003"/>
</dbReference>
<dbReference type="Proteomes" id="UP000000754">
    <property type="component" value="Chromosome"/>
</dbReference>
<dbReference type="GO" id="GO:0005737">
    <property type="term" value="C:cytoplasm"/>
    <property type="evidence" value="ECO:0007669"/>
    <property type="project" value="UniProtKB-SubCell"/>
</dbReference>
<dbReference type="GO" id="GO:0003864">
    <property type="term" value="F:3-methyl-2-oxobutanoate hydroxymethyltransferase activity"/>
    <property type="evidence" value="ECO:0007669"/>
    <property type="project" value="UniProtKB-UniRule"/>
</dbReference>
<dbReference type="GO" id="GO:0000287">
    <property type="term" value="F:magnesium ion binding"/>
    <property type="evidence" value="ECO:0007669"/>
    <property type="project" value="TreeGrafter"/>
</dbReference>
<dbReference type="GO" id="GO:0015940">
    <property type="term" value="P:pantothenate biosynthetic process"/>
    <property type="evidence" value="ECO:0007669"/>
    <property type="project" value="UniProtKB-UniRule"/>
</dbReference>
<dbReference type="CDD" id="cd06557">
    <property type="entry name" value="KPHMT-like"/>
    <property type="match status" value="1"/>
</dbReference>
<dbReference type="FunFam" id="3.20.20.60:FF:000003">
    <property type="entry name" value="3-methyl-2-oxobutanoate hydroxymethyltransferase"/>
    <property type="match status" value="1"/>
</dbReference>
<dbReference type="Gene3D" id="3.20.20.60">
    <property type="entry name" value="Phosphoenolpyruvate-binding domains"/>
    <property type="match status" value="1"/>
</dbReference>
<dbReference type="HAMAP" id="MF_00156">
    <property type="entry name" value="PanB"/>
    <property type="match status" value="1"/>
</dbReference>
<dbReference type="InterPro" id="IPR003700">
    <property type="entry name" value="Pantoate_hydroxy_MeTrfase"/>
</dbReference>
<dbReference type="InterPro" id="IPR015813">
    <property type="entry name" value="Pyrv/PenolPyrv_kinase-like_dom"/>
</dbReference>
<dbReference type="InterPro" id="IPR040442">
    <property type="entry name" value="Pyrv_kinase-like_dom_sf"/>
</dbReference>
<dbReference type="NCBIfam" id="TIGR00222">
    <property type="entry name" value="panB"/>
    <property type="match status" value="1"/>
</dbReference>
<dbReference type="NCBIfam" id="NF001452">
    <property type="entry name" value="PRK00311.1"/>
    <property type="match status" value="1"/>
</dbReference>
<dbReference type="PANTHER" id="PTHR20881">
    <property type="entry name" value="3-METHYL-2-OXOBUTANOATE HYDROXYMETHYLTRANSFERASE"/>
    <property type="match status" value="1"/>
</dbReference>
<dbReference type="PANTHER" id="PTHR20881:SF0">
    <property type="entry name" value="3-METHYL-2-OXOBUTANOATE HYDROXYMETHYLTRANSFERASE"/>
    <property type="match status" value="1"/>
</dbReference>
<dbReference type="Pfam" id="PF02548">
    <property type="entry name" value="Pantoate_transf"/>
    <property type="match status" value="1"/>
</dbReference>
<dbReference type="PIRSF" id="PIRSF000388">
    <property type="entry name" value="Pantoate_hydroxy_MeTrfase"/>
    <property type="match status" value="1"/>
</dbReference>
<dbReference type="SUPFAM" id="SSF51621">
    <property type="entry name" value="Phosphoenolpyruvate/pyruvate domain"/>
    <property type="match status" value="1"/>
</dbReference>
<accession>A0JVB5</accession>
<gene>
    <name evidence="1" type="primary">panB</name>
    <name type="ordered locus">Arth_1591</name>
</gene>
<proteinExistence type="inferred from homology"/>
<comment type="function">
    <text evidence="1">Catalyzes the reversible reaction in which hydroxymethyl group from 5,10-methylenetetrahydrofolate is transferred onto alpha-ketoisovalerate to form ketopantoate.</text>
</comment>
<comment type="catalytic activity">
    <reaction evidence="1">
        <text>3-methyl-2-oxobutanoate + (6R)-5,10-methylene-5,6,7,8-tetrahydrofolate + H2O = 2-dehydropantoate + (6S)-5,6,7,8-tetrahydrofolate</text>
        <dbReference type="Rhea" id="RHEA:11824"/>
        <dbReference type="ChEBI" id="CHEBI:11561"/>
        <dbReference type="ChEBI" id="CHEBI:11851"/>
        <dbReference type="ChEBI" id="CHEBI:15377"/>
        <dbReference type="ChEBI" id="CHEBI:15636"/>
        <dbReference type="ChEBI" id="CHEBI:57453"/>
        <dbReference type="EC" id="2.1.2.11"/>
    </reaction>
</comment>
<comment type="cofactor">
    <cofactor evidence="1">
        <name>Mg(2+)</name>
        <dbReference type="ChEBI" id="CHEBI:18420"/>
    </cofactor>
    <text evidence="1">Binds 1 Mg(2+) ion per subunit.</text>
</comment>
<comment type="pathway">
    <text evidence="1">Cofactor biosynthesis; (R)-pantothenate biosynthesis; (R)-pantoate from 3-methyl-2-oxobutanoate: step 1/2.</text>
</comment>
<comment type="subunit">
    <text evidence="1">Homodecamer; pentamer of dimers.</text>
</comment>
<comment type="subcellular location">
    <subcellularLocation>
        <location evidence="1">Cytoplasm</location>
    </subcellularLocation>
</comment>
<comment type="similarity">
    <text evidence="1">Belongs to the PanB family.</text>
</comment>
<reference key="1">
    <citation type="journal article" date="2013" name="Stand. Genomic Sci.">
        <title>Complete genome sequence of Arthrobacter sp. strain FB24.</title>
        <authorList>
            <person name="Nakatsu C.H."/>
            <person name="Barabote R."/>
            <person name="Thompson S."/>
            <person name="Bruce D."/>
            <person name="Detter C."/>
            <person name="Brettin T."/>
            <person name="Han C."/>
            <person name="Beasley F."/>
            <person name="Chen W."/>
            <person name="Konopka A."/>
            <person name="Xie G."/>
        </authorList>
    </citation>
    <scope>NUCLEOTIDE SEQUENCE [LARGE SCALE GENOMIC DNA]</scope>
    <source>
        <strain>FB24</strain>
    </source>
</reference>
<name>PANB_ARTS2</name>
<feature type="chain" id="PRO_0000297217" description="3-methyl-2-oxobutanoate hydroxymethyltransferase">
    <location>
        <begin position="1"/>
        <end position="301"/>
    </location>
</feature>
<feature type="region of interest" description="Disordered" evidence="2">
    <location>
        <begin position="1"/>
        <end position="37"/>
    </location>
</feature>
<feature type="compositionally biased region" description="Low complexity" evidence="2">
    <location>
        <begin position="1"/>
        <end position="28"/>
    </location>
</feature>
<feature type="active site" description="Proton acceptor" evidence="1">
    <location>
        <position position="219"/>
    </location>
</feature>
<feature type="binding site" evidence="1">
    <location>
        <begin position="82"/>
        <end position="83"/>
    </location>
    <ligand>
        <name>3-methyl-2-oxobutanoate</name>
        <dbReference type="ChEBI" id="CHEBI:11851"/>
    </ligand>
</feature>
<feature type="binding site" evidence="1">
    <location>
        <position position="82"/>
    </location>
    <ligand>
        <name>Mg(2+)</name>
        <dbReference type="ChEBI" id="CHEBI:18420"/>
    </ligand>
</feature>
<feature type="binding site" evidence="1">
    <location>
        <position position="121"/>
    </location>
    <ligand>
        <name>3-methyl-2-oxobutanoate</name>
        <dbReference type="ChEBI" id="CHEBI:11851"/>
    </ligand>
</feature>
<feature type="binding site" evidence="1">
    <location>
        <position position="121"/>
    </location>
    <ligand>
        <name>Mg(2+)</name>
        <dbReference type="ChEBI" id="CHEBI:18420"/>
    </ligand>
</feature>
<feature type="binding site" evidence="1">
    <location>
        <position position="151"/>
    </location>
    <ligand>
        <name>3-methyl-2-oxobutanoate</name>
        <dbReference type="ChEBI" id="CHEBI:11851"/>
    </ligand>
</feature>
<feature type="binding site" evidence="1">
    <location>
        <position position="153"/>
    </location>
    <ligand>
        <name>Mg(2+)</name>
        <dbReference type="ChEBI" id="CHEBI:18420"/>
    </ligand>
</feature>
<keyword id="KW-0963">Cytoplasm</keyword>
<keyword id="KW-0460">Magnesium</keyword>
<keyword id="KW-0479">Metal-binding</keyword>
<keyword id="KW-0566">Pantothenate biosynthesis</keyword>
<keyword id="KW-1185">Reference proteome</keyword>
<keyword id="KW-0808">Transferase</keyword>
<protein>
    <recommendedName>
        <fullName evidence="1">3-methyl-2-oxobutanoate hydroxymethyltransferase</fullName>
        <ecNumber evidence="1">2.1.2.11</ecNumber>
    </recommendedName>
    <alternativeName>
        <fullName evidence="1">Ketopantoate hydroxymethyltransferase</fullName>
        <shortName evidence="1">KPHMT</shortName>
    </alternativeName>
</protein>
<organism>
    <name type="scientific">Arthrobacter sp. (strain FB24)</name>
    <dbReference type="NCBI Taxonomy" id="290399"/>
    <lineage>
        <taxon>Bacteria</taxon>
        <taxon>Bacillati</taxon>
        <taxon>Actinomycetota</taxon>
        <taxon>Actinomycetes</taxon>
        <taxon>Micrococcales</taxon>
        <taxon>Micrococcaceae</taxon>
        <taxon>Arthrobacter</taxon>
    </lineage>
</organism>